<sequence>MSRAPRTARAELPKGEQARHVPVLLAEVLAALSLDRPGLAVDGTFGAGGYTRALLEAGPEVRVIAIDRDPTAIRGGADLVTASGGRLRLVQGRFGDLDTLIADQDEAQADWIVLDIGVSSMQIDEAQRGFSFRQDGPLDMRMGGEGPSAADLVNGEEETTLADILYHFGEERRSRAVARAIVEARRRAPIETTAQLADLVAGVVRPEPGSPIHPATRSFQGLRIAVNDELGELVRGLHAAERVLKPGGRLAVVTFHSLEDRIVKQFFSARSGRAAQASRHVPGVERPAPKSFKLVTKGPVLPSEAETDVNPRSRSAKLRAGERTDAPAPPPLSAIEMLASLPAPQGRGPRR</sequence>
<feature type="chain" id="PRO_0000386974" description="Ribosomal RNA small subunit methyltransferase H">
    <location>
        <begin position="1"/>
        <end position="351"/>
    </location>
</feature>
<feature type="region of interest" description="Disordered" evidence="2">
    <location>
        <begin position="274"/>
        <end position="351"/>
    </location>
</feature>
<feature type="binding site" evidence="1">
    <location>
        <begin position="48"/>
        <end position="50"/>
    </location>
    <ligand>
        <name>S-adenosyl-L-methionine</name>
        <dbReference type="ChEBI" id="CHEBI:59789"/>
    </ligand>
</feature>
<feature type="binding site" evidence="1">
    <location>
        <position position="67"/>
    </location>
    <ligand>
        <name>S-adenosyl-L-methionine</name>
        <dbReference type="ChEBI" id="CHEBI:59789"/>
    </ligand>
</feature>
<feature type="binding site" evidence="1">
    <location>
        <position position="94"/>
    </location>
    <ligand>
        <name>S-adenosyl-L-methionine</name>
        <dbReference type="ChEBI" id="CHEBI:59789"/>
    </ligand>
</feature>
<feature type="binding site" evidence="1">
    <location>
        <position position="115"/>
    </location>
    <ligand>
        <name>S-adenosyl-L-methionine</name>
        <dbReference type="ChEBI" id="CHEBI:59789"/>
    </ligand>
</feature>
<feature type="binding site" evidence="1">
    <location>
        <position position="122"/>
    </location>
    <ligand>
        <name>S-adenosyl-L-methionine</name>
        <dbReference type="ChEBI" id="CHEBI:59789"/>
    </ligand>
</feature>
<keyword id="KW-0963">Cytoplasm</keyword>
<keyword id="KW-0489">Methyltransferase</keyword>
<keyword id="KW-1185">Reference proteome</keyword>
<keyword id="KW-0698">rRNA processing</keyword>
<keyword id="KW-0949">S-adenosyl-L-methionine</keyword>
<keyword id="KW-0808">Transferase</keyword>
<name>RSMH_METEA</name>
<proteinExistence type="inferred from homology"/>
<reference key="1">
    <citation type="journal article" date="2009" name="PLoS ONE">
        <title>Methylobacterium genome sequences: a reference blueprint to investigate microbial metabolism of C1 compounds from natural and industrial sources.</title>
        <authorList>
            <person name="Vuilleumier S."/>
            <person name="Chistoserdova L."/>
            <person name="Lee M.-C."/>
            <person name="Bringel F."/>
            <person name="Lajus A."/>
            <person name="Zhou Y."/>
            <person name="Gourion B."/>
            <person name="Barbe V."/>
            <person name="Chang J."/>
            <person name="Cruveiller S."/>
            <person name="Dossat C."/>
            <person name="Gillett W."/>
            <person name="Gruffaz C."/>
            <person name="Haugen E."/>
            <person name="Hourcade E."/>
            <person name="Levy R."/>
            <person name="Mangenot S."/>
            <person name="Muller E."/>
            <person name="Nadalig T."/>
            <person name="Pagni M."/>
            <person name="Penny C."/>
            <person name="Peyraud R."/>
            <person name="Robinson D.G."/>
            <person name="Roche D."/>
            <person name="Rouy Z."/>
            <person name="Saenampechek C."/>
            <person name="Salvignol G."/>
            <person name="Vallenet D."/>
            <person name="Wu Z."/>
            <person name="Marx C.J."/>
            <person name="Vorholt J.A."/>
            <person name="Olson M.V."/>
            <person name="Kaul R."/>
            <person name="Weissenbach J."/>
            <person name="Medigue C."/>
            <person name="Lidstrom M.E."/>
        </authorList>
    </citation>
    <scope>NUCLEOTIDE SEQUENCE [LARGE SCALE GENOMIC DNA]</scope>
    <source>
        <strain>ATCC 14718 / DSM 1338 / JCM 2805 / NCIMB 9133 / AM1</strain>
    </source>
</reference>
<dbReference type="EC" id="2.1.1.199" evidence="1"/>
<dbReference type="EMBL" id="CP001510">
    <property type="protein sequence ID" value="ACS42694.1"/>
    <property type="molecule type" value="Genomic_DNA"/>
</dbReference>
<dbReference type="RefSeq" id="WP_015857597.1">
    <property type="nucleotide sequence ID" value="NC_012808.1"/>
</dbReference>
<dbReference type="SMR" id="C5ATZ5"/>
<dbReference type="STRING" id="272630.MexAM1_META1p5090"/>
<dbReference type="KEGG" id="mea:Mex_1p5090"/>
<dbReference type="eggNOG" id="COG0275">
    <property type="taxonomic scope" value="Bacteria"/>
</dbReference>
<dbReference type="HOGENOM" id="CLU_038422_1_1_5"/>
<dbReference type="OrthoDB" id="9806637at2"/>
<dbReference type="Proteomes" id="UP000009081">
    <property type="component" value="Chromosome"/>
</dbReference>
<dbReference type="GO" id="GO:0005737">
    <property type="term" value="C:cytoplasm"/>
    <property type="evidence" value="ECO:0007669"/>
    <property type="project" value="UniProtKB-SubCell"/>
</dbReference>
<dbReference type="GO" id="GO:0071424">
    <property type="term" value="F:rRNA (cytosine-N4-)-methyltransferase activity"/>
    <property type="evidence" value="ECO:0007669"/>
    <property type="project" value="UniProtKB-UniRule"/>
</dbReference>
<dbReference type="GO" id="GO:0070475">
    <property type="term" value="P:rRNA base methylation"/>
    <property type="evidence" value="ECO:0007669"/>
    <property type="project" value="UniProtKB-UniRule"/>
</dbReference>
<dbReference type="Gene3D" id="1.10.150.170">
    <property type="entry name" value="Putative methyltransferase TM0872, insert domain"/>
    <property type="match status" value="1"/>
</dbReference>
<dbReference type="Gene3D" id="3.40.50.150">
    <property type="entry name" value="Vaccinia Virus protein VP39"/>
    <property type="match status" value="1"/>
</dbReference>
<dbReference type="HAMAP" id="MF_01007">
    <property type="entry name" value="16SrRNA_methyltr_H"/>
    <property type="match status" value="1"/>
</dbReference>
<dbReference type="InterPro" id="IPR002903">
    <property type="entry name" value="RsmH"/>
</dbReference>
<dbReference type="InterPro" id="IPR023397">
    <property type="entry name" value="SAM-dep_MeTrfase_MraW_recog"/>
</dbReference>
<dbReference type="InterPro" id="IPR029063">
    <property type="entry name" value="SAM-dependent_MTases_sf"/>
</dbReference>
<dbReference type="NCBIfam" id="TIGR00006">
    <property type="entry name" value="16S rRNA (cytosine(1402)-N(4))-methyltransferase RsmH"/>
    <property type="match status" value="1"/>
</dbReference>
<dbReference type="PANTHER" id="PTHR11265:SF0">
    <property type="entry name" value="12S RRNA N4-METHYLCYTIDINE METHYLTRANSFERASE"/>
    <property type="match status" value="1"/>
</dbReference>
<dbReference type="PANTHER" id="PTHR11265">
    <property type="entry name" value="S-ADENOSYL-METHYLTRANSFERASE MRAW"/>
    <property type="match status" value="1"/>
</dbReference>
<dbReference type="Pfam" id="PF01795">
    <property type="entry name" value="Methyltransf_5"/>
    <property type="match status" value="1"/>
</dbReference>
<dbReference type="PIRSF" id="PIRSF004486">
    <property type="entry name" value="MraW"/>
    <property type="match status" value="1"/>
</dbReference>
<dbReference type="SUPFAM" id="SSF81799">
    <property type="entry name" value="Putative methyltransferase TM0872, insert domain"/>
    <property type="match status" value="1"/>
</dbReference>
<dbReference type="SUPFAM" id="SSF53335">
    <property type="entry name" value="S-adenosyl-L-methionine-dependent methyltransferases"/>
    <property type="match status" value="1"/>
</dbReference>
<accession>C5ATZ5</accession>
<evidence type="ECO:0000255" key="1">
    <source>
        <dbReference type="HAMAP-Rule" id="MF_01007"/>
    </source>
</evidence>
<evidence type="ECO:0000256" key="2">
    <source>
        <dbReference type="SAM" id="MobiDB-lite"/>
    </source>
</evidence>
<protein>
    <recommendedName>
        <fullName evidence="1">Ribosomal RNA small subunit methyltransferase H</fullName>
        <ecNumber evidence="1">2.1.1.199</ecNumber>
    </recommendedName>
    <alternativeName>
        <fullName evidence="1">16S rRNA m(4)C1402 methyltransferase</fullName>
    </alternativeName>
    <alternativeName>
        <fullName evidence="1">rRNA (cytosine-N(4)-)-methyltransferase RsmH</fullName>
    </alternativeName>
</protein>
<organism>
    <name type="scientific">Methylorubrum extorquens (strain ATCC 14718 / DSM 1338 / JCM 2805 / NCIMB 9133 / AM1)</name>
    <name type="common">Methylobacterium extorquens</name>
    <dbReference type="NCBI Taxonomy" id="272630"/>
    <lineage>
        <taxon>Bacteria</taxon>
        <taxon>Pseudomonadati</taxon>
        <taxon>Pseudomonadota</taxon>
        <taxon>Alphaproteobacteria</taxon>
        <taxon>Hyphomicrobiales</taxon>
        <taxon>Methylobacteriaceae</taxon>
        <taxon>Methylorubrum</taxon>
    </lineage>
</organism>
<gene>
    <name evidence="1" type="primary">rsmH</name>
    <name type="synonym">mraW</name>
    <name type="ordered locus">MexAM1_META1p5090</name>
</gene>
<comment type="function">
    <text evidence="1">Specifically methylates the N4 position of cytidine in position 1402 (C1402) of 16S rRNA.</text>
</comment>
<comment type="catalytic activity">
    <reaction evidence="1">
        <text>cytidine(1402) in 16S rRNA + S-adenosyl-L-methionine = N(4)-methylcytidine(1402) in 16S rRNA + S-adenosyl-L-homocysteine + H(+)</text>
        <dbReference type="Rhea" id="RHEA:42928"/>
        <dbReference type="Rhea" id="RHEA-COMP:10286"/>
        <dbReference type="Rhea" id="RHEA-COMP:10287"/>
        <dbReference type="ChEBI" id="CHEBI:15378"/>
        <dbReference type="ChEBI" id="CHEBI:57856"/>
        <dbReference type="ChEBI" id="CHEBI:59789"/>
        <dbReference type="ChEBI" id="CHEBI:74506"/>
        <dbReference type="ChEBI" id="CHEBI:82748"/>
        <dbReference type="EC" id="2.1.1.199"/>
    </reaction>
</comment>
<comment type="subcellular location">
    <subcellularLocation>
        <location evidence="1">Cytoplasm</location>
    </subcellularLocation>
</comment>
<comment type="similarity">
    <text evidence="1">Belongs to the methyltransferase superfamily. RsmH family.</text>
</comment>